<protein>
    <recommendedName>
        <fullName>Resolvase</fullName>
    </recommendedName>
    <alternativeName>
        <fullName>Protein D</fullName>
    </alternativeName>
</protein>
<evidence type="ECO:0000255" key="1">
    <source>
        <dbReference type="PROSITE-ProRule" id="PRU01246"/>
    </source>
</evidence>
<evidence type="ECO:0000305" key="2"/>
<gene>
    <name type="primary">resD</name>
    <name type="synonym">D</name>
    <name type="ordered locus">ECOK12F044</name>
</gene>
<dbReference type="EMBL" id="X04967">
    <property type="protein sequence ID" value="CAA28640.1"/>
    <property type="molecule type" value="Genomic_DNA"/>
</dbReference>
<dbReference type="EMBL" id="M12987">
    <property type="protein sequence ID" value="AAA24900.1"/>
    <property type="status" value="ALT_INIT"/>
    <property type="molecule type" value="Genomic_DNA"/>
</dbReference>
<dbReference type="EMBL" id="AP001918">
    <property type="protein sequence ID" value="BAA97914.1"/>
    <property type="molecule type" value="Genomic_DNA"/>
</dbReference>
<dbReference type="EMBL" id="X03410">
    <property type="protein sequence ID" value="CAA27145.1"/>
    <property type="molecule type" value="Genomic_DNA"/>
</dbReference>
<dbReference type="EMBL" id="X00594">
    <property type="protein sequence ID" value="CAA25245.1"/>
    <property type="molecule type" value="Genomic_DNA"/>
</dbReference>
<dbReference type="PIR" id="A24716">
    <property type="entry name" value="A24716"/>
</dbReference>
<dbReference type="RefSeq" id="NP_061423.1">
    <property type="nucleotide sequence ID" value="NC_002483.1"/>
</dbReference>
<dbReference type="PhylomeDB" id="P06615"/>
<dbReference type="GO" id="GO:0003677">
    <property type="term" value="F:DNA binding"/>
    <property type="evidence" value="ECO:0007669"/>
    <property type="project" value="InterPro"/>
</dbReference>
<dbReference type="GO" id="GO:0015074">
    <property type="term" value="P:DNA integration"/>
    <property type="evidence" value="ECO:0007669"/>
    <property type="project" value="UniProtKB-KW"/>
</dbReference>
<dbReference type="GO" id="GO:0006310">
    <property type="term" value="P:DNA recombination"/>
    <property type="evidence" value="ECO:0007669"/>
    <property type="project" value="UniProtKB-KW"/>
</dbReference>
<dbReference type="Gene3D" id="1.10.443.10">
    <property type="entry name" value="Intergrase catalytic core"/>
    <property type="match status" value="1"/>
</dbReference>
<dbReference type="InterPro" id="IPR011010">
    <property type="entry name" value="DNA_brk_join_enz"/>
</dbReference>
<dbReference type="InterPro" id="IPR013762">
    <property type="entry name" value="Integrase-like_cat_sf"/>
</dbReference>
<dbReference type="InterPro" id="IPR002104">
    <property type="entry name" value="Integrase_catalytic"/>
</dbReference>
<dbReference type="InterPro" id="IPR016423">
    <property type="entry name" value="Resolvase_Rsv"/>
</dbReference>
<dbReference type="InterPro" id="IPR050090">
    <property type="entry name" value="Tyrosine_recombinase_XerCD"/>
</dbReference>
<dbReference type="PANTHER" id="PTHR30349">
    <property type="entry name" value="PHAGE INTEGRASE-RELATED"/>
    <property type="match status" value="1"/>
</dbReference>
<dbReference type="PANTHER" id="PTHR30349:SF90">
    <property type="entry name" value="TYROSINE RECOMBINASE XERD"/>
    <property type="match status" value="1"/>
</dbReference>
<dbReference type="Pfam" id="PF00589">
    <property type="entry name" value="Phage_integrase"/>
    <property type="match status" value="1"/>
</dbReference>
<dbReference type="PIRSF" id="PIRSF004576">
    <property type="entry name" value="Resolvase_Rsv"/>
    <property type="match status" value="1"/>
</dbReference>
<dbReference type="SUPFAM" id="SSF56349">
    <property type="entry name" value="DNA breaking-rejoining enzymes"/>
    <property type="match status" value="1"/>
</dbReference>
<dbReference type="PROSITE" id="PS51898">
    <property type="entry name" value="TYR_RECOMBINASE"/>
    <property type="match status" value="1"/>
</dbReference>
<reference key="1">
    <citation type="journal article" date="1986" name="Nucleic Acids Res.">
        <title>D protein of miniF plasmid acts as a repressor of transcription and as a site-specific resolvase.</title>
        <authorList>
            <person name="Lane D."/>
            <person name="de Feyter R."/>
            <person name="Kennedy M."/>
            <person name="Phua S.-H."/>
            <person name="Semon D."/>
        </authorList>
    </citation>
    <scope>NUCLEOTIDE SEQUENCE [GENOMIC DNA]</scope>
</reference>
<reference key="2">
    <citation type="submission" date="1986-08" db="EMBL/GenBank/DDBJ databases">
        <title>F plasmid DNA complete mini-F region (F coordinates 40.301F to 49.869F).</title>
        <authorList>
            <person name="Eichenlaub R."/>
        </authorList>
    </citation>
    <scope>NUCLEOTIDE SEQUENCE [GENOMIC DNA]</scope>
</reference>
<reference key="3">
    <citation type="submission" date="2000-04" db="EMBL/GenBank/DDBJ databases">
        <title>Complete nucleotide sequence of the F plasmid: its implications for organization and diversification of plasmid genomes.</title>
        <authorList>
            <person name="Shimizu H."/>
            <person name="Saitoh Y."/>
            <person name="Suda Y."/>
            <person name="Uehara K."/>
            <person name="Sampei G."/>
            <person name="Mizobuchi K."/>
        </authorList>
    </citation>
    <scope>NUCLEOTIDE SEQUENCE [LARGE SCALE GENOMIC DNA]</scope>
    <source>
        <strain>K12 / CR63</strain>
    </source>
</reference>
<reference key="4">
    <citation type="journal article" date="1986" name="Mol. Gen. Genet.">
        <title>The repeated sequences (incB) preceding the protein E gene of plasmid mini-F are essential for replication.</title>
        <authorList>
            <person name="Disque-Kochem C."/>
            <person name="Seidel U."/>
            <person name="Helsberg M."/>
            <person name="Eichenlaub R."/>
        </authorList>
    </citation>
    <scope>NUCLEOTIDE SEQUENCE [GENOMIC DNA] OF 262-268</scope>
</reference>
<reference key="5">
    <citation type="journal article" date="1984" name="J. Mol. Biol.">
        <title>Control of cell division by sex factor F in Escherichia coli. I. The 42.84-43.6 F segment couples cell division of the host bacteria with replication of plasmid DNA.</title>
        <authorList>
            <person name="Miki T."/>
            <person name="Yoshioka K."/>
            <person name="Horiuchi T."/>
        </authorList>
    </citation>
    <scope>NUCLEOTIDE SEQUENCE [GENOMIC DNA] OF 1-11</scope>
</reference>
<organism>
    <name type="scientific">Escherichia coli (strain K12)</name>
    <dbReference type="NCBI Taxonomy" id="83333"/>
    <lineage>
        <taxon>Bacteria</taxon>
        <taxon>Pseudomonadati</taxon>
        <taxon>Pseudomonadota</taxon>
        <taxon>Gammaproteobacteria</taxon>
        <taxon>Enterobacterales</taxon>
        <taxon>Enterobacteriaceae</taxon>
        <taxon>Escherichia</taxon>
    </lineage>
</organism>
<feature type="chain" id="PRO_0000197547" description="Resolvase">
    <location>
        <begin position="1"/>
        <end position="268"/>
    </location>
</feature>
<feature type="domain" description="Tyr recombinase" evidence="1">
    <location>
        <begin position="47"/>
        <end position="250"/>
    </location>
</feature>
<feature type="active site" evidence="1">
    <location>
        <position position="82"/>
    </location>
</feature>
<feature type="active site" evidence="1">
    <location>
        <position position="114"/>
    </location>
</feature>
<feature type="active site" evidence="1">
    <location>
        <position position="202"/>
    </location>
</feature>
<feature type="active site" evidence="1">
    <location>
        <position position="205"/>
    </location>
</feature>
<feature type="active site" evidence="1">
    <location>
        <position position="228"/>
    </location>
</feature>
<feature type="active site" description="O-(3'-phospho-DNA)-tyrosine intermediate" evidence="1">
    <location>
        <position position="237"/>
    </location>
</feature>
<feature type="sequence conflict" description="In Ref. 3; BAA97914." evidence="2" ref="3">
    <original>Q</original>
    <variation>T</variation>
    <location>
        <position position="149"/>
    </location>
</feature>
<geneLocation type="plasmid">
    <name>F</name>
</geneLocation>
<sequence length="268" mass="29627">MSGSVIHSQSAVMVPAVYSAGQPASLPVAIDYPAALALRQMSMVHDELPKYLLAPEVSALLHYVPDLHRKMLLATLWNTGARINEALALTRGDFSLAPPYPFVQLATLKQRTEKAARTAGRMPAGQQTHRLVPLSDSWYVSQLQTMVAQLKIPMERRNRRTGRTEKARIWEVTDRTVRTWIGEAVAAAAADGVTFSVPVTPHTFRHSYAMHMLYAGIPLKVLQSLMGHKSISSTEVYTKVFALDVAARHRVQFAMPESDAVAMLKQLS</sequence>
<accession>P06615</accession>
<proteinExistence type="inferred from homology"/>
<name>REDF_ECOLI</name>
<keyword id="KW-0229">DNA integration</keyword>
<keyword id="KW-0233">DNA recombination</keyword>
<keyword id="KW-0614">Plasmid</keyword>
<keyword id="KW-0678">Repressor</keyword>
<keyword id="KW-0804">Transcription</keyword>
<keyword id="KW-0805">Transcription regulation</keyword>
<comment type="function">
    <text>Acts as a repressor of transcription and as a site-specific resolvase that cleaves at the RfsF site.</text>
</comment>
<comment type="similarity">
    <text evidence="2">Belongs to the 'phage' integrase family.</text>
</comment>
<comment type="sequence caution" evidence="2">
    <conflict type="erroneous initiation">
        <sequence resource="EMBL-CDS" id="AAA24900"/>
    </conflict>
</comment>